<evidence type="ECO:0000255" key="1">
    <source>
        <dbReference type="HAMAP-Rule" id="MF_01005"/>
    </source>
</evidence>
<protein>
    <recommendedName>
        <fullName evidence="1">Vitamin B12 import ATP-binding protein BtuD</fullName>
        <ecNumber evidence="1">7.6.2.8</ecNumber>
    </recommendedName>
    <alternativeName>
        <fullName evidence="1">Vitamin B12-transporting ATPase</fullName>
    </alternativeName>
</protein>
<name>BTUD_VIBA3</name>
<accession>B7VPD0</accession>
<feature type="chain" id="PRO_1000148797" description="Vitamin B12 import ATP-binding protein BtuD">
    <location>
        <begin position="1"/>
        <end position="252"/>
    </location>
</feature>
<feature type="domain" description="ABC transporter" evidence="1">
    <location>
        <begin position="2"/>
        <end position="237"/>
    </location>
</feature>
<feature type="binding site" evidence="1">
    <location>
        <begin position="30"/>
        <end position="37"/>
    </location>
    <ligand>
        <name>ATP</name>
        <dbReference type="ChEBI" id="CHEBI:30616"/>
    </ligand>
</feature>
<gene>
    <name evidence="1" type="primary">btuD</name>
    <name type="ordered locus">VS_1695</name>
</gene>
<dbReference type="EC" id="7.6.2.8" evidence="1"/>
<dbReference type="EMBL" id="FM954972">
    <property type="protein sequence ID" value="CAV18879.1"/>
    <property type="molecule type" value="Genomic_DNA"/>
</dbReference>
<dbReference type="SMR" id="B7VPD0"/>
<dbReference type="STRING" id="575788.VS_1695"/>
<dbReference type="KEGG" id="vsp:VS_1695"/>
<dbReference type="PATRIC" id="fig|575788.5.peg.2988"/>
<dbReference type="eggNOG" id="COG4138">
    <property type="taxonomic scope" value="Bacteria"/>
</dbReference>
<dbReference type="HOGENOM" id="CLU_000604_1_11_6"/>
<dbReference type="Proteomes" id="UP000009100">
    <property type="component" value="Chromosome 1"/>
</dbReference>
<dbReference type="GO" id="GO:0005886">
    <property type="term" value="C:plasma membrane"/>
    <property type="evidence" value="ECO:0007669"/>
    <property type="project" value="UniProtKB-SubCell"/>
</dbReference>
<dbReference type="GO" id="GO:0015420">
    <property type="term" value="F:ABC-type vitamin B12 transporter activity"/>
    <property type="evidence" value="ECO:0007669"/>
    <property type="project" value="UniProtKB-UniRule"/>
</dbReference>
<dbReference type="GO" id="GO:0005524">
    <property type="term" value="F:ATP binding"/>
    <property type="evidence" value="ECO:0007669"/>
    <property type="project" value="UniProtKB-KW"/>
</dbReference>
<dbReference type="GO" id="GO:0016887">
    <property type="term" value="F:ATP hydrolysis activity"/>
    <property type="evidence" value="ECO:0007669"/>
    <property type="project" value="InterPro"/>
</dbReference>
<dbReference type="CDD" id="cd03214">
    <property type="entry name" value="ABC_Iron-Siderophores_B12_Hemin"/>
    <property type="match status" value="1"/>
</dbReference>
<dbReference type="FunFam" id="3.40.50.300:FF:000462">
    <property type="entry name" value="Vitamin B12 import ATP-binding protein BtuD"/>
    <property type="match status" value="1"/>
</dbReference>
<dbReference type="Gene3D" id="3.40.50.300">
    <property type="entry name" value="P-loop containing nucleotide triphosphate hydrolases"/>
    <property type="match status" value="1"/>
</dbReference>
<dbReference type="HAMAP" id="MF_01005">
    <property type="entry name" value="BtuD"/>
    <property type="match status" value="1"/>
</dbReference>
<dbReference type="InterPro" id="IPR003593">
    <property type="entry name" value="AAA+_ATPase"/>
</dbReference>
<dbReference type="InterPro" id="IPR003439">
    <property type="entry name" value="ABC_transporter-like_ATP-bd"/>
</dbReference>
<dbReference type="InterPro" id="IPR023693">
    <property type="entry name" value="ABC_transptr_BtuD"/>
</dbReference>
<dbReference type="InterPro" id="IPR050153">
    <property type="entry name" value="Metal_Ion_Import_ABC"/>
</dbReference>
<dbReference type="InterPro" id="IPR027417">
    <property type="entry name" value="P-loop_NTPase"/>
</dbReference>
<dbReference type="NCBIfam" id="NF002981">
    <property type="entry name" value="PRK03695.1"/>
    <property type="match status" value="1"/>
</dbReference>
<dbReference type="PANTHER" id="PTHR42734">
    <property type="entry name" value="METAL TRANSPORT SYSTEM ATP-BINDING PROTEIN TM_0124-RELATED"/>
    <property type="match status" value="1"/>
</dbReference>
<dbReference type="PANTHER" id="PTHR42734:SF18">
    <property type="entry name" value="VITAMIN B12 IMPORT ATP-BINDING PROTEIN BTUD"/>
    <property type="match status" value="1"/>
</dbReference>
<dbReference type="Pfam" id="PF00005">
    <property type="entry name" value="ABC_tran"/>
    <property type="match status" value="1"/>
</dbReference>
<dbReference type="SMART" id="SM00382">
    <property type="entry name" value="AAA"/>
    <property type="match status" value="1"/>
</dbReference>
<dbReference type="SUPFAM" id="SSF52540">
    <property type="entry name" value="P-loop containing nucleoside triphosphate hydrolases"/>
    <property type="match status" value="1"/>
</dbReference>
<dbReference type="PROSITE" id="PS50893">
    <property type="entry name" value="ABC_TRANSPORTER_2"/>
    <property type="match status" value="1"/>
</dbReference>
<reference key="1">
    <citation type="submission" date="2009-02" db="EMBL/GenBank/DDBJ databases">
        <title>Vibrio splendidus str. LGP32 complete genome.</title>
        <authorList>
            <person name="Mazel D."/>
            <person name="Le Roux F."/>
        </authorList>
    </citation>
    <scope>NUCLEOTIDE SEQUENCE [LARGE SCALE GENOMIC DNA]</scope>
    <source>
        <strain>LGP32</strain>
    </source>
</reference>
<keyword id="KW-0067">ATP-binding</keyword>
<keyword id="KW-0997">Cell inner membrane</keyword>
<keyword id="KW-1003">Cell membrane</keyword>
<keyword id="KW-0472">Membrane</keyword>
<keyword id="KW-0547">Nucleotide-binding</keyword>
<keyword id="KW-1278">Translocase</keyword>
<keyword id="KW-0813">Transport</keyword>
<sequence>MIQIKSLSVGARLLPLSFELKQGQVTHVIGPNGSGKSTLLEAISGVGDGYKGDIKLDGQDLSELSLQDLSLHRAYLCQSARPAFNLEVFQYLALSLPSSSHGLDIEINAALDEISQMLDISDKLHRSIQTLSGGEWQRVRLAGMCLQIWPTLNPYAKLLILDEPAAPLDIAQEALLYKLIERVAEKGIAVIMANHDLNRTLRHADQVLLLEKGVLQTSGSAEQVLVPEQLESVFNTQVKSISVDNQTYLLFG</sequence>
<comment type="function">
    <text evidence="1">Part of the ABC transporter complex BtuCDF involved in vitamin B12 import. Responsible for energy coupling to the transport system.</text>
</comment>
<comment type="catalytic activity">
    <reaction evidence="1">
        <text>an R-cob(III)alamin(out) + ATP + H2O = an R-cob(III)alamin(in) + ADP + phosphate + H(+)</text>
        <dbReference type="Rhea" id="RHEA:17873"/>
        <dbReference type="ChEBI" id="CHEBI:15377"/>
        <dbReference type="ChEBI" id="CHEBI:15378"/>
        <dbReference type="ChEBI" id="CHEBI:30616"/>
        <dbReference type="ChEBI" id="CHEBI:43474"/>
        <dbReference type="ChEBI" id="CHEBI:140785"/>
        <dbReference type="ChEBI" id="CHEBI:456216"/>
        <dbReference type="EC" id="7.6.2.8"/>
    </reaction>
</comment>
<comment type="subunit">
    <text evidence="1">The complex is composed of two ATP-binding proteins (BtuD), two transmembrane proteins (BtuC) and a solute-binding protein (BtuF).</text>
</comment>
<comment type="subcellular location">
    <subcellularLocation>
        <location evidence="1">Cell inner membrane</location>
        <topology evidence="1">Peripheral membrane protein</topology>
    </subcellularLocation>
</comment>
<comment type="similarity">
    <text evidence="1">Belongs to the ABC transporter superfamily. Vitamin B12 importer (TC 3.A.1.13.1) family.</text>
</comment>
<organism>
    <name type="scientific">Vibrio atlanticus (strain LGP32)</name>
    <name type="common">Vibrio splendidus (strain Mel32)</name>
    <dbReference type="NCBI Taxonomy" id="575788"/>
    <lineage>
        <taxon>Bacteria</taxon>
        <taxon>Pseudomonadati</taxon>
        <taxon>Pseudomonadota</taxon>
        <taxon>Gammaproteobacteria</taxon>
        <taxon>Vibrionales</taxon>
        <taxon>Vibrionaceae</taxon>
        <taxon>Vibrio</taxon>
    </lineage>
</organism>
<proteinExistence type="inferred from homology"/>